<gene>
    <name type="primary">sldA</name>
    <name type="synonym">ga5dhB</name>
    <name type="ordered locus">GOX0854</name>
</gene>
<sequence>MRRSHLLATVACATLACAPLAANAQFAPAGSGGSPTSSVPGPGNGSGNSFEPTENTPAAKSRFSGPSPYAPQAPGVNAANLPDIGSMDPNDVPQMAPQQSASPASGDWAAYGHDDSQMRYSPLSEITPQNADQLKVAFVYHTGSYPRPGQTNKWAAETTPIKVGDGLYMCSAQNDIMKIDPATGKEIWRHNINEKYEAIPYTAACKGVTYFTSSQVPEGQPCHNRILEGTLDMRLIAVDAATGNLCEGFGNGGQVNLMQGLGESVPGFVSMTTPPPVVNGVVVVNHEVLDGQRRWAPSGVIRGYDAESGKFLWAWDVNRPNDHSQPTGNNHYSRGTPNSWAAMTGDNALGLVYVPTGNSASDYYSALRSPEENKVSSAVVALDVKTGSPRWVFQTVHKDVWDYDIGSQATLMDMPGQDGQPVPALIMPTKRGQTFVLDRRDGKPILPVEERPAPSPGVIPGDPRSPTQPWSTGMPALRVPDLKETDMWGMSPIDQLFCRIKFRRANYTGEFTPPSVDKPWIEYPGYNGGSDWGSVSYDPQSGILIANWNITPMYDQLVTRKKADELGLMPIDDPNYKPGGGGAEGNGAMDGTPYGIVVTPFWDQYTGMMCNRPPYGMITAIDMKHGQKVLWQHPLGTARANGPWGLPTGLPWEIGTPNNGGSVVTAGGVVFIAAATDNQIRAIDEHTGKVVWSAVLPGGGQANPMTYEANGHQYVAIMAGGHHFMMTPVSDQLVVYALPDHKG</sequence>
<proteinExistence type="inferred from homology"/>
<comment type="function">
    <text evidence="1">Catalyzes the oxidation of glycerol to glycerone. Also acts, more slowly, on a number of other polyols including D-sorbitol, D-arabinitol, D-mannitol, meso-erythritol, adonitol and propylene glycol (By similarity).</text>
</comment>
<comment type="catalytic activity">
    <reaction>
        <text>glycerol + A = dihydroxyacetone + AH2</text>
        <dbReference type="Rhea" id="RHEA:17493"/>
        <dbReference type="ChEBI" id="CHEBI:13193"/>
        <dbReference type="ChEBI" id="CHEBI:16016"/>
        <dbReference type="ChEBI" id="CHEBI:17499"/>
        <dbReference type="ChEBI" id="CHEBI:17754"/>
        <dbReference type="EC" id="1.1.99.22"/>
    </reaction>
</comment>
<comment type="cofactor">
    <cofactor evidence="1">
        <name>pyrroloquinoline quinone</name>
        <dbReference type="ChEBI" id="CHEBI:58442"/>
    </cofactor>
</comment>
<comment type="subcellular location">
    <subcellularLocation>
        <location evidence="4">Secreted</location>
    </subcellularLocation>
</comment>
<comment type="similarity">
    <text evidence="4">Belongs to the bacterial PQQ dehydrogenase family.</text>
</comment>
<evidence type="ECO:0000250" key="1"/>
<evidence type="ECO:0000255" key="2"/>
<evidence type="ECO:0000256" key="3">
    <source>
        <dbReference type="SAM" id="MobiDB-lite"/>
    </source>
</evidence>
<evidence type="ECO:0000305" key="4"/>
<keyword id="KW-0560">Oxidoreductase</keyword>
<keyword id="KW-1185">Reference proteome</keyword>
<keyword id="KW-0964">Secreted</keyword>
<keyword id="KW-0732">Signal</keyword>
<protein>
    <recommendedName>
        <fullName>Glycerol dehydrogenase large subunit</fullName>
        <ecNumber>1.1.99.22</ecNumber>
    </recommendedName>
    <alternativeName>
        <fullName>D-arabitol dehydrogenase large subunit</fullName>
        <shortName>ARDH</shortName>
    </alternativeName>
    <alternativeName>
        <fullName>D-sorbitol dehydrogenase subunit SldA</fullName>
        <shortName>SLDH</shortName>
    </alternativeName>
    <alternativeName>
        <fullName>Gluconate/polyol dehydrogenase large subunit</fullName>
    </alternativeName>
</protein>
<accession>Q70JN9</accession>
<accession>Q5FSL8</accession>
<name>SLDA_GLUOX</name>
<reference key="1">
    <citation type="journal article" date="2004" name="Appl. Microbiol. Biotechnol.">
        <title>Cloning of a gluconate/polyol dehydrogenase gene from Gluconobacter suboxydans IFO 12528, characterisation of the enzyme and its use for the production of 5-ketogluconate in a recombinant Escherichia coli strain.</title>
        <authorList>
            <person name="Salusjaervi T."/>
            <person name="Povelainen M."/>
            <person name="Hvorslev N."/>
            <person name="Eneyskaya E.E."/>
            <person name="Kulminskaya A.A."/>
            <person name="Shabalin K.A."/>
            <person name="Neustroev K.N."/>
            <person name="Kalkkinen N."/>
            <person name="Miasnikov A.N."/>
        </authorList>
    </citation>
    <scope>NUCLEOTIDE SEQUENCE [GENOMIC DNA]</scope>
    <source>
        <strain>ATCC 621 / DSM 50049 / NBRC 3172 / NCIMB 7069 / NRRL B-72</strain>
    </source>
</reference>
<reference key="2">
    <citation type="journal article" date="2005" name="Nat. Biotechnol.">
        <title>Complete genome sequence of the acetic acid bacterium Gluconobacter oxydans.</title>
        <authorList>
            <person name="Prust C."/>
            <person name="Hoffmeister M."/>
            <person name="Liesegang H."/>
            <person name="Wiezer A."/>
            <person name="Fricke W.F."/>
            <person name="Ehrenreich A."/>
            <person name="Gottschalk G."/>
            <person name="Deppenmeier U."/>
        </authorList>
    </citation>
    <scope>NUCLEOTIDE SEQUENCE [LARGE SCALE GENOMIC DNA]</scope>
    <source>
        <strain>621H</strain>
    </source>
</reference>
<dbReference type="EC" id="1.1.99.22"/>
<dbReference type="EMBL" id="AJ577472">
    <property type="protein sequence ID" value="CAE12058.1"/>
    <property type="molecule type" value="Genomic_DNA"/>
</dbReference>
<dbReference type="EMBL" id="CP000009">
    <property type="protein sequence ID" value="AAW60628.1"/>
    <property type="molecule type" value="Genomic_DNA"/>
</dbReference>
<dbReference type="RefSeq" id="WP_011252424.1">
    <property type="nucleotide sequence ID" value="NC_006677.1"/>
</dbReference>
<dbReference type="SMR" id="Q70JN9"/>
<dbReference type="STRING" id="290633.GOX0854"/>
<dbReference type="KEGG" id="gox:GOX0854"/>
<dbReference type="eggNOG" id="COG4993">
    <property type="taxonomic scope" value="Bacteria"/>
</dbReference>
<dbReference type="HOGENOM" id="CLU_018478_1_0_5"/>
<dbReference type="BRENDA" id="1.1.1.69">
    <property type="organism ID" value="38"/>
</dbReference>
<dbReference type="BRENDA" id="1.1.99.21">
    <property type="organism ID" value="38"/>
</dbReference>
<dbReference type="Proteomes" id="UP000006375">
    <property type="component" value="Chromosome"/>
</dbReference>
<dbReference type="GO" id="GO:0005576">
    <property type="term" value="C:extracellular region"/>
    <property type="evidence" value="ECO:0007669"/>
    <property type="project" value="UniProtKB-SubCell"/>
</dbReference>
<dbReference type="GO" id="GO:0016020">
    <property type="term" value="C:membrane"/>
    <property type="evidence" value="ECO:0007669"/>
    <property type="project" value="InterPro"/>
</dbReference>
<dbReference type="GO" id="GO:0047955">
    <property type="term" value="F:glycerol dehydrogenase (acceptor) activity"/>
    <property type="evidence" value="ECO:0007669"/>
    <property type="project" value="UniProtKB-EC"/>
</dbReference>
<dbReference type="GO" id="GO:0048038">
    <property type="term" value="F:quinone binding"/>
    <property type="evidence" value="ECO:0007669"/>
    <property type="project" value="InterPro"/>
</dbReference>
<dbReference type="GO" id="GO:0008876">
    <property type="term" value="F:quinoprotein glucose dehydrogenase activity"/>
    <property type="evidence" value="ECO:0007669"/>
    <property type="project" value="TreeGrafter"/>
</dbReference>
<dbReference type="CDD" id="cd10280">
    <property type="entry name" value="PQQ_mGDH"/>
    <property type="match status" value="1"/>
</dbReference>
<dbReference type="Gene3D" id="2.140.10.10">
    <property type="entry name" value="Quinoprotein alcohol dehydrogenase-like superfamily"/>
    <property type="match status" value="2"/>
</dbReference>
<dbReference type="InterPro" id="IPR018391">
    <property type="entry name" value="PQQ_b-propeller_rpt"/>
</dbReference>
<dbReference type="InterPro" id="IPR017511">
    <property type="entry name" value="PQQ_mDH"/>
</dbReference>
<dbReference type="InterPro" id="IPR002372">
    <property type="entry name" value="PQQ_rpt_dom"/>
</dbReference>
<dbReference type="InterPro" id="IPR011047">
    <property type="entry name" value="Quinoprotein_ADH-like_sf"/>
</dbReference>
<dbReference type="PANTHER" id="PTHR32303">
    <property type="entry name" value="QUINOPROTEIN ALCOHOL DEHYDROGENASE (CYTOCHROME C)"/>
    <property type="match status" value="1"/>
</dbReference>
<dbReference type="PANTHER" id="PTHR32303:SF4">
    <property type="entry name" value="QUINOPROTEIN GLUCOSE DEHYDROGENASE"/>
    <property type="match status" value="1"/>
</dbReference>
<dbReference type="Pfam" id="PF01011">
    <property type="entry name" value="PQQ"/>
    <property type="match status" value="1"/>
</dbReference>
<dbReference type="SMART" id="SM00564">
    <property type="entry name" value="PQQ"/>
    <property type="match status" value="4"/>
</dbReference>
<dbReference type="SUPFAM" id="SSF50998">
    <property type="entry name" value="Quinoprotein alcohol dehydrogenase-like"/>
    <property type="match status" value="1"/>
</dbReference>
<feature type="signal peptide" evidence="2">
    <location>
        <begin position="1"/>
        <end position="24"/>
    </location>
</feature>
<feature type="chain" id="PRO_0000045857" description="Glycerol dehydrogenase large subunit">
    <location>
        <begin position="25"/>
        <end position="743"/>
    </location>
</feature>
<feature type="region of interest" description="Disordered" evidence="3">
    <location>
        <begin position="27"/>
        <end position="115"/>
    </location>
</feature>
<feature type="region of interest" description="Disordered" evidence="3">
    <location>
        <begin position="445"/>
        <end position="474"/>
    </location>
</feature>
<feature type="compositionally biased region" description="Low complexity" evidence="3">
    <location>
        <begin position="27"/>
        <end position="41"/>
    </location>
</feature>
<organism>
    <name type="scientific">Gluconobacter oxydans (strain 621H)</name>
    <name type="common">Gluconobacter suboxydans</name>
    <dbReference type="NCBI Taxonomy" id="290633"/>
    <lineage>
        <taxon>Bacteria</taxon>
        <taxon>Pseudomonadati</taxon>
        <taxon>Pseudomonadota</taxon>
        <taxon>Alphaproteobacteria</taxon>
        <taxon>Acetobacterales</taxon>
        <taxon>Acetobacteraceae</taxon>
        <taxon>Gluconobacter</taxon>
    </lineage>
</organism>